<proteinExistence type="inferred from homology"/>
<accession>B2I7R6</accession>
<sequence length="121" mass="13996">MLNRRDCGAAVEVAARRHLERAGLRWLASNVCFRGGELDLVMYDVMSVVFVEVRYRQQESHGSAAQSVDRRKRRKLVMAAQLFLQRHPFLAQVPCRFDVVEGAGRPLQLHWIRDAFRLDDC</sequence>
<dbReference type="EMBL" id="CP001011">
    <property type="protein sequence ID" value="ACB93081.1"/>
    <property type="molecule type" value="Genomic_DNA"/>
</dbReference>
<dbReference type="RefSeq" id="WP_004083551.1">
    <property type="nucleotide sequence ID" value="NC_010577.1"/>
</dbReference>
<dbReference type="SMR" id="B2I7R6"/>
<dbReference type="KEGG" id="xfn:XfasM23_1674"/>
<dbReference type="HOGENOM" id="CLU_115353_1_0_6"/>
<dbReference type="Proteomes" id="UP000001698">
    <property type="component" value="Chromosome"/>
</dbReference>
<dbReference type="GO" id="GO:0003676">
    <property type="term" value="F:nucleic acid binding"/>
    <property type="evidence" value="ECO:0007669"/>
    <property type="project" value="InterPro"/>
</dbReference>
<dbReference type="Gene3D" id="3.40.1350.10">
    <property type="match status" value="1"/>
</dbReference>
<dbReference type="HAMAP" id="MF_00048">
    <property type="entry name" value="UPF0102"/>
    <property type="match status" value="1"/>
</dbReference>
<dbReference type="InterPro" id="IPR011335">
    <property type="entry name" value="Restrct_endonuc-II-like"/>
</dbReference>
<dbReference type="InterPro" id="IPR011856">
    <property type="entry name" value="tRNA_endonuc-like_dom_sf"/>
</dbReference>
<dbReference type="InterPro" id="IPR003509">
    <property type="entry name" value="UPF0102_YraN-like"/>
</dbReference>
<dbReference type="NCBIfam" id="NF009150">
    <property type="entry name" value="PRK12497.1-3"/>
    <property type="match status" value="1"/>
</dbReference>
<dbReference type="NCBIfam" id="TIGR00252">
    <property type="entry name" value="YraN family protein"/>
    <property type="match status" value="1"/>
</dbReference>
<dbReference type="PANTHER" id="PTHR34039">
    <property type="entry name" value="UPF0102 PROTEIN YRAN"/>
    <property type="match status" value="1"/>
</dbReference>
<dbReference type="PANTHER" id="PTHR34039:SF1">
    <property type="entry name" value="UPF0102 PROTEIN YRAN"/>
    <property type="match status" value="1"/>
</dbReference>
<dbReference type="Pfam" id="PF02021">
    <property type="entry name" value="UPF0102"/>
    <property type="match status" value="1"/>
</dbReference>
<dbReference type="SUPFAM" id="SSF52980">
    <property type="entry name" value="Restriction endonuclease-like"/>
    <property type="match status" value="1"/>
</dbReference>
<feature type="chain" id="PRO_1000091274" description="UPF0102 protein XfasM23_1674">
    <location>
        <begin position="1"/>
        <end position="121"/>
    </location>
</feature>
<gene>
    <name type="ordered locus">XfasM23_1674</name>
</gene>
<name>Y1674_XYLF2</name>
<evidence type="ECO:0000255" key="1">
    <source>
        <dbReference type="HAMAP-Rule" id="MF_00048"/>
    </source>
</evidence>
<protein>
    <recommendedName>
        <fullName evidence="1">UPF0102 protein XfasM23_1674</fullName>
    </recommendedName>
</protein>
<reference key="1">
    <citation type="journal article" date="2010" name="J. Bacteriol.">
        <title>Whole genome sequences of two Xylella fastidiosa strains (M12 and M23) causing almond leaf scorch disease in California.</title>
        <authorList>
            <person name="Chen J."/>
            <person name="Xie G."/>
            <person name="Han S."/>
            <person name="Chertkov O."/>
            <person name="Sims D."/>
            <person name="Civerolo E.L."/>
        </authorList>
    </citation>
    <scope>NUCLEOTIDE SEQUENCE [LARGE SCALE GENOMIC DNA]</scope>
    <source>
        <strain>M23</strain>
    </source>
</reference>
<organism>
    <name type="scientific">Xylella fastidiosa (strain M23)</name>
    <dbReference type="NCBI Taxonomy" id="405441"/>
    <lineage>
        <taxon>Bacteria</taxon>
        <taxon>Pseudomonadati</taxon>
        <taxon>Pseudomonadota</taxon>
        <taxon>Gammaproteobacteria</taxon>
        <taxon>Lysobacterales</taxon>
        <taxon>Lysobacteraceae</taxon>
        <taxon>Xylella</taxon>
    </lineage>
</organism>
<comment type="similarity">
    <text evidence="1">Belongs to the UPF0102 family.</text>
</comment>